<feature type="chain" id="PRO_1000059926" description="Large ribosomal subunit protein bL12">
    <location>
        <begin position="1"/>
        <end position="121"/>
    </location>
</feature>
<proteinExistence type="inferred from homology"/>
<reference key="1">
    <citation type="journal article" date="2011" name="PLoS Genet.">
        <title>The evolution of host specialization in the vertebrate gut symbiont Lactobacillus reuteri.</title>
        <authorList>
            <person name="Frese S.A."/>
            <person name="Benson A.K."/>
            <person name="Tannock G.W."/>
            <person name="Loach D.M."/>
            <person name="Kim J."/>
            <person name="Zhang M."/>
            <person name="Oh P.L."/>
            <person name="Heng N.C."/>
            <person name="Patil P.B."/>
            <person name="Juge N."/>
            <person name="Mackenzie D.A."/>
            <person name="Pearson B.M."/>
            <person name="Lapidus A."/>
            <person name="Dalin E."/>
            <person name="Tice H."/>
            <person name="Goltsman E."/>
            <person name="Land M."/>
            <person name="Hauser L."/>
            <person name="Ivanova N."/>
            <person name="Kyrpides N.C."/>
            <person name="Walter J."/>
        </authorList>
    </citation>
    <scope>NUCLEOTIDE SEQUENCE [LARGE SCALE GENOMIC DNA]</scope>
    <source>
        <strain>DSM 20016</strain>
    </source>
</reference>
<sequence>MAFDKDAIIASLKEASISDLNDLVKAIEEEFDVSAAAPVAVAGAAGGDAAAKDSFTVELTEPGSAKVKVIKAVKDITGLGLKDAKDLVDGAPSAIKEDVKEDEANDIKEKLEAAGATVTLK</sequence>
<gene>
    <name evidence="1" type="primary">rplL</name>
    <name type="ordered locus">Lreu_0314</name>
</gene>
<organism>
    <name type="scientific">Limosilactobacillus reuteri (strain DSM 20016)</name>
    <name type="common">Lactobacillus reuteri</name>
    <dbReference type="NCBI Taxonomy" id="557436"/>
    <lineage>
        <taxon>Bacteria</taxon>
        <taxon>Bacillati</taxon>
        <taxon>Bacillota</taxon>
        <taxon>Bacilli</taxon>
        <taxon>Lactobacillales</taxon>
        <taxon>Lactobacillaceae</taxon>
        <taxon>Limosilactobacillus</taxon>
    </lineage>
</organism>
<protein>
    <recommendedName>
        <fullName evidence="1">Large ribosomal subunit protein bL12</fullName>
    </recommendedName>
    <alternativeName>
        <fullName evidence="2">50S ribosomal protein L7/L12</fullName>
    </alternativeName>
</protein>
<accession>A5VIB0</accession>
<keyword id="KW-1185">Reference proteome</keyword>
<keyword id="KW-0687">Ribonucleoprotein</keyword>
<keyword id="KW-0689">Ribosomal protein</keyword>
<name>RL7_LIMRD</name>
<comment type="function">
    <text evidence="1">Forms part of the ribosomal stalk which helps the ribosome interact with GTP-bound translation factors. Is thus essential for accurate translation.</text>
</comment>
<comment type="subunit">
    <text evidence="1">Homodimer. Part of the ribosomal stalk of the 50S ribosomal subunit. Forms a multimeric L10(L12)X complex, where L10 forms an elongated spine to which 2 to 4 L12 dimers bind in a sequential fashion. Binds GTP-bound translation factors.</text>
</comment>
<comment type="similarity">
    <text evidence="1">Belongs to the bacterial ribosomal protein bL12 family.</text>
</comment>
<dbReference type="EMBL" id="CP000705">
    <property type="protein sequence ID" value="ABQ82584.1"/>
    <property type="molecule type" value="Genomic_DNA"/>
</dbReference>
<dbReference type="RefSeq" id="WP_003666310.1">
    <property type="nucleotide sequence ID" value="NZ_AZDD01000008.1"/>
</dbReference>
<dbReference type="SMR" id="A5VIB0"/>
<dbReference type="STRING" id="557436.Lreu_0314"/>
<dbReference type="GeneID" id="77190118"/>
<dbReference type="KEGG" id="lre:Lreu_0314"/>
<dbReference type="PATRIC" id="fig|557436.17.peg.1897"/>
<dbReference type="eggNOG" id="COG0222">
    <property type="taxonomic scope" value="Bacteria"/>
</dbReference>
<dbReference type="HOGENOM" id="CLU_086499_3_2_9"/>
<dbReference type="Proteomes" id="UP000001991">
    <property type="component" value="Chromosome"/>
</dbReference>
<dbReference type="GO" id="GO:0022625">
    <property type="term" value="C:cytosolic large ribosomal subunit"/>
    <property type="evidence" value="ECO:0007669"/>
    <property type="project" value="TreeGrafter"/>
</dbReference>
<dbReference type="GO" id="GO:0003729">
    <property type="term" value="F:mRNA binding"/>
    <property type="evidence" value="ECO:0007669"/>
    <property type="project" value="TreeGrafter"/>
</dbReference>
<dbReference type="GO" id="GO:0003735">
    <property type="term" value="F:structural constituent of ribosome"/>
    <property type="evidence" value="ECO:0007669"/>
    <property type="project" value="InterPro"/>
</dbReference>
<dbReference type="GO" id="GO:0006412">
    <property type="term" value="P:translation"/>
    <property type="evidence" value="ECO:0007669"/>
    <property type="project" value="UniProtKB-UniRule"/>
</dbReference>
<dbReference type="CDD" id="cd00387">
    <property type="entry name" value="Ribosomal_L7_L12"/>
    <property type="match status" value="1"/>
</dbReference>
<dbReference type="FunFam" id="3.30.1390.10:FF:000001">
    <property type="entry name" value="50S ribosomal protein L7/L12"/>
    <property type="match status" value="1"/>
</dbReference>
<dbReference type="Gene3D" id="3.30.1390.10">
    <property type="match status" value="1"/>
</dbReference>
<dbReference type="Gene3D" id="1.20.5.710">
    <property type="entry name" value="Single helix bin"/>
    <property type="match status" value="1"/>
</dbReference>
<dbReference type="HAMAP" id="MF_00368">
    <property type="entry name" value="Ribosomal_bL12"/>
    <property type="match status" value="1"/>
</dbReference>
<dbReference type="InterPro" id="IPR000206">
    <property type="entry name" value="Ribosomal_bL12"/>
</dbReference>
<dbReference type="InterPro" id="IPR013823">
    <property type="entry name" value="Ribosomal_bL12_C"/>
</dbReference>
<dbReference type="InterPro" id="IPR014719">
    <property type="entry name" value="Ribosomal_bL12_C/ClpS-like"/>
</dbReference>
<dbReference type="InterPro" id="IPR008932">
    <property type="entry name" value="Ribosomal_bL12_oligo"/>
</dbReference>
<dbReference type="InterPro" id="IPR036235">
    <property type="entry name" value="Ribosomal_bL12_oligo_N_sf"/>
</dbReference>
<dbReference type="NCBIfam" id="TIGR00855">
    <property type="entry name" value="L12"/>
    <property type="match status" value="1"/>
</dbReference>
<dbReference type="PANTHER" id="PTHR45987">
    <property type="entry name" value="39S RIBOSOMAL PROTEIN L12"/>
    <property type="match status" value="1"/>
</dbReference>
<dbReference type="PANTHER" id="PTHR45987:SF4">
    <property type="entry name" value="LARGE RIBOSOMAL SUBUNIT PROTEIN BL12M"/>
    <property type="match status" value="1"/>
</dbReference>
<dbReference type="Pfam" id="PF00542">
    <property type="entry name" value="Ribosomal_L12"/>
    <property type="match status" value="1"/>
</dbReference>
<dbReference type="Pfam" id="PF16320">
    <property type="entry name" value="Ribosomal_L12_N"/>
    <property type="match status" value="1"/>
</dbReference>
<dbReference type="SUPFAM" id="SSF54736">
    <property type="entry name" value="ClpS-like"/>
    <property type="match status" value="1"/>
</dbReference>
<dbReference type="SUPFAM" id="SSF48300">
    <property type="entry name" value="Ribosomal protein L7/12, oligomerisation (N-terminal) domain"/>
    <property type="match status" value="1"/>
</dbReference>
<evidence type="ECO:0000255" key="1">
    <source>
        <dbReference type="HAMAP-Rule" id="MF_00368"/>
    </source>
</evidence>
<evidence type="ECO:0000305" key="2"/>